<keyword id="KW-0963">Cytoplasm</keyword>
<keyword id="KW-0342">GTP-binding</keyword>
<keyword id="KW-0436">Ligase</keyword>
<keyword id="KW-0460">Magnesium</keyword>
<keyword id="KW-0479">Metal-binding</keyword>
<keyword id="KW-0547">Nucleotide-binding</keyword>
<keyword id="KW-0658">Purine biosynthesis</keyword>
<evidence type="ECO:0000255" key="1">
    <source>
        <dbReference type="HAMAP-Rule" id="MF_00011"/>
    </source>
</evidence>
<protein>
    <recommendedName>
        <fullName evidence="1">Adenylosuccinate synthetase</fullName>
        <shortName evidence="1">AMPSase</shortName>
        <shortName evidence="1">AdSS</shortName>
        <ecNumber evidence="1">6.3.4.4</ecNumber>
    </recommendedName>
    <alternativeName>
        <fullName evidence="1">IMP--aspartate ligase</fullName>
    </alternativeName>
</protein>
<organism>
    <name type="scientific">Mycolicibacterium vanbaalenii (strain DSM 7251 / JCM 13017 / BCRC 16820 / KCTC 9966 / NRRL B-24157 / PYR-1)</name>
    <name type="common">Mycobacterium vanbaalenii</name>
    <dbReference type="NCBI Taxonomy" id="350058"/>
    <lineage>
        <taxon>Bacteria</taxon>
        <taxon>Bacillati</taxon>
        <taxon>Actinomycetota</taxon>
        <taxon>Actinomycetes</taxon>
        <taxon>Mycobacteriales</taxon>
        <taxon>Mycobacteriaceae</taxon>
        <taxon>Mycolicibacterium</taxon>
    </lineage>
</organism>
<reference key="1">
    <citation type="submission" date="2006-12" db="EMBL/GenBank/DDBJ databases">
        <title>Complete sequence of Mycobacterium vanbaalenii PYR-1.</title>
        <authorList>
            <consortium name="US DOE Joint Genome Institute"/>
            <person name="Copeland A."/>
            <person name="Lucas S."/>
            <person name="Lapidus A."/>
            <person name="Barry K."/>
            <person name="Detter J.C."/>
            <person name="Glavina del Rio T."/>
            <person name="Hammon N."/>
            <person name="Israni S."/>
            <person name="Dalin E."/>
            <person name="Tice H."/>
            <person name="Pitluck S."/>
            <person name="Singan V."/>
            <person name="Schmutz J."/>
            <person name="Larimer F."/>
            <person name="Land M."/>
            <person name="Hauser L."/>
            <person name="Kyrpides N."/>
            <person name="Anderson I.J."/>
            <person name="Miller C."/>
            <person name="Richardson P."/>
        </authorList>
    </citation>
    <scope>NUCLEOTIDE SEQUENCE [LARGE SCALE GENOMIC DNA]</scope>
    <source>
        <strain>DSM 7251 / JCM 13017 / BCRC 16820 / KCTC 9966 / NRRL B-24157 / PYR-1</strain>
    </source>
</reference>
<comment type="function">
    <text evidence="1">Plays an important role in the de novo pathway of purine nucleotide biosynthesis. Catalyzes the first committed step in the biosynthesis of AMP from IMP.</text>
</comment>
<comment type="catalytic activity">
    <reaction evidence="1">
        <text>IMP + L-aspartate + GTP = N(6)-(1,2-dicarboxyethyl)-AMP + GDP + phosphate + 2 H(+)</text>
        <dbReference type="Rhea" id="RHEA:15753"/>
        <dbReference type="ChEBI" id="CHEBI:15378"/>
        <dbReference type="ChEBI" id="CHEBI:29991"/>
        <dbReference type="ChEBI" id="CHEBI:37565"/>
        <dbReference type="ChEBI" id="CHEBI:43474"/>
        <dbReference type="ChEBI" id="CHEBI:57567"/>
        <dbReference type="ChEBI" id="CHEBI:58053"/>
        <dbReference type="ChEBI" id="CHEBI:58189"/>
        <dbReference type="EC" id="6.3.4.4"/>
    </reaction>
</comment>
<comment type="cofactor">
    <cofactor evidence="1">
        <name>Mg(2+)</name>
        <dbReference type="ChEBI" id="CHEBI:18420"/>
    </cofactor>
    <text evidence="1">Binds 1 Mg(2+) ion per subunit.</text>
</comment>
<comment type="pathway">
    <text evidence="1">Purine metabolism; AMP biosynthesis via de novo pathway; AMP from IMP: step 1/2.</text>
</comment>
<comment type="subunit">
    <text evidence="1">Homodimer.</text>
</comment>
<comment type="subcellular location">
    <subcellularLocation>
        <location evidence="1">Cytoplasm</location>
    </subcellularLocation>
</comment>
<comment type="similarity">
    <text evidence="1">Belongs to the adenylosuccinate synthetase family.</text>
</comment>
<name>PURA_MYCVP</name>
<sequence>MPAIVLIGAQWGDEGKGKATDLLGGRVQWVVRYQGGNNAGHTVVLPTGENFALHLIPSGILTPGVTNVIGNGVVVDPGVLLAELKGLEERGVDTERLLISADAHLLMPYHVAIDKVVERYAGSKKIGTTGRGIGPCYQDKIARQGIRVADVLDPALLAEKIEGALELKNQVLVKIYNRKALDPAEVVENLLEQADGFKHRIADARLLLNEALERNETVLLEGSQGTLLDVDHGTYPFVTSSNPTAGGASVGSGIGPTRITTVLGILKAYTTRVGSGPFPTELFDDHGAYLAKTGGEVGVTTGRARRCGWFDAVIARYATRVNGITDYFLTKLDVLSSLETVPICVGYSVDGKRTDEMPMTQSDIARAEPIYEELPGWWEDISGCRTFDELPAKARDYVLRLEDLAGAHVSCIGVGPGRDQTIVRRDVLAAR</sequence>
<dbReference type="EC" id="6.3.4.4" evidence="1"/>
<dbReference type="EMBL" id="CP000511">
    <property type="protein sequence ID" value="ABM11515.1"/>
    <property type="molecule type" value="Genomic_DNA"/>
</dbReference>
<dbReference type="RefSeq" id="WP_011777952.1">
    <property type="nucleotide sequence ID" value="NZ_JACKSD010000046.1"/>
</dbReference>
<dbReference type="SMR" id="A1T2W5"/>
<dbReference type="STRING" id="350058.Mvan_0677"/>
<dbReference type="KEGG" id="mva:Mvan_0677"/>
<dbReference type="eggNOG" id="COG0104">
    <property type="taxonomic scope" value="Bacteria"/>
</dbReference>
<dbReference type="HOGENOM" id="CLU_029848_0_0_11"/>
<dbReference type="UniPathway" id="UPA00075">
    <property type="reaction ID" value="UER00335"/>
</dbReference>
<dbReference type="Proteomes" id="UP000009159">
    <property type="component" value="Chromosome"/>
</dbReference>
<dbReference type="GO" id="GO:0005737">
    <property type="term" value="C:cytoplasm"/>
    <property type="evidence" value="ECO:0007669"/>
    <property type="project" value="UniProtKB-SubCell"/>
</dbReference>
<dbReference type="GO" id="GO:0004019">
    <property type="term" value="F:adenylosuccinate synthase activity"/>
    <property type="evidence" value="ECO:0007669"/>
    <property type="project" value="UniProtKB-UniRule"/>
</dbReference>
<dbReference type="GO" id="GO:0005525">
    <property type="term" value="F:GTP binding"/>
    <property type="evidence" value="ECO:0007669"/>
    <property type="project" value="UniProtKB-UniRule"/>
</dbReference>
<dbReference type="GO" id="GO:0000287">
    <property type="term" value="F:magnesium ion binding"/>
    <property type="evidence" value="ECO:0007669"/>
    <property type="project" value="UniProtKB-UniRule"/>
</dbReference>
<dbReference type="GO" id="GO:0044208">
    <property type="term" value="P:'de novo' AMP biosynthetic process"/>
    <property type="evidence" value="ECO:0007669"/>
    <property type="project" value="UniProtKB-UniRule"/>
</dbReference>
<dbReference type="GO" id="GO:0046040">
    <property type="term" value="P:IMP metabolic process"/>
    <property type="evidence" value="ECO:0007669"/>
    <property type="project" value="TreeGrafter"/>
</dbReference>
<dbReference type="CDD" id="cd03108">
    <property type="entry name" value="AdSS"/>
    <property type="match status" value="1"/>
</dbReference>
<dbReference type="FunFam" id="1.10.300.10:FF:000001">
    <property type="entry name" value="Adenylosuccinate synthetase"/>
    <property type="match status" value="1"/>
</dbReference>
<dbReference type="FunFam" id="3.90.170.10:FF:000001">
    <property type="entry name" value="Adenylosuccinate synthetase"/>
    <property type="match status" value="1"/>
</dbReference>
<dbReference type="Gene3D" id="3.40.440.10">
    <property type="entry name" value="Adenylosuccinate Synthetase, subunit A, domain 1"/>
    <property type="match status" value="1"/>
</dbReference>
<dbReference type="Gene3D" id="1.10.300.10">
    <property type="entry name" value="Adenylosuccinate Synthetase, subunit A, domain 2"/>
    <property type="match status" value="1"/>
</dbReference>
<dbReference type="Gene3D" id="3.90.170.10">
    <property type="entry name" value="Adenylosuccinate Synthetase, subunit A, domain 3"/>
    <property type="match status" value="1"/>
</dbReference>
<dbReference type="HAMAP" id="MF_00011">
    <property type="entry name" value="Adenylosucc_synth"/>
    <property type="match status" value="1"/>
</dbReference>
<dbReference type="InterPro" id="IPR018220">
    <property type="entry name" value="Adenylosuccin_syn_GTP-bd"/>
</dbReference>
<dbReference type="InterPro" id="IPR033128">
    <property type="entry name" value="Adenylosuccin_syn_Lys_AS"/>
</dbReference>
<dbReference type="InterPro" id="IPR042109">
    <property type="entry name" value="Adenylosuccinate_synth_dom1"/>
</dbReference>
<dbReference type="InterPro" id="IPR042110">
    <property type="entry name" value="Adenylosuccinate_synth_dom2"/>
</dbReference>
<dbReference type="InterPro" id="IPR042111">
    <property type="entry name" value="Adenylosuccinate_synth_dom3"/>
</dbReference>
<dbReference type="InterPro" id="IPR001114">
    <property type="entry name" value="Adenylosuccinate_synthetase"/>
</dbReference>
<dbReference type="InterPro" id="IPR027417">
    <property type="entry name" value="P-loop_NTPase"/>
</dbReference>
<dbReference type="NCBIfam" id="NF002223">
    <property type="entry name" value="PRK01117.1"/>
    <property type="match status" value="1"/>
</dbReference>
<dbReference type="NCBIfam" id="TIGR00184">
    <property type="entry name" value="purA"/>
    <property type="match status" value="1"/>
</dbReference>
<dbReference type="PANTHER" id="PTHR11846">
    <property type="entry name" value="ADENYLOSUCCINATE SYNTHETASE"/>
    <property type="match status" value="1"/>
</dbReference>
<dbReference type="PANTHER" id="PTHR11846:SF0">
    <property type="entry name" value="ADENYLOSUCCINATE SYNTHETASE"/>
    <property type="match status" value="1"/>
</dbReference>
<dbReference type="Pfam" id="PF00709">
    <property type="entry name" value="Adenylsucc_synt"/>
    <property type="match status" value="1"/>
</dbReference>
<dbReference type="SMART" id="SM00788">
    <property type="entry name" value="Adenylsucc_synt"/>
    <property type="match status" value="1"/>
</dbReference>
<dbReference type="SUPFAM" id="SSF52540">
    <property type="entry name" value="P-loop containing nucleoside triphosphate hydrolases"/>
    <property type="match status" value="1"/>
</dbReference>
<dbReference type="PROSITE" id="PS01266">
    <property type="entry name" value="ADENYLOSUCCIN_SYN_1"/>
    <property type="match status" value="1"/>
</dbReference>
<dbReference type="PROSITE" id="PS00513">
    <property type="entry name" value="ADENYLOSUCCIN_SYN_2"/>
    <property type="match status" value="1"/>
</dbReference>
<proteinExistence type="inferred from homology"/>
<gene>
    <name evidence="1" type="primary">purA</name>
    <name type="ordered locus">Mvan_0677</name>
</gene>
<accession>A1T2W5</accession>
<feature type="chain" id="PRO_1000000874" description="Adenylosuccinate synthetase">
    <location>
        <begin position="1"/>
        <end position="431"/>
    </location>
</feature>
<feature type="active site" description="Proton acceptor" evidence="1">
    <location>
        <position position="13"/>
    </location>
</feature>
<feature type="active site" description="Proton donor" evidence="1">
    <location>
        <position position="41"/>
    </location>
</feature>
<feature type="binding site" evidence="1">
    <location>
        <begin position="12"/>
        <end position="18"/>
    </location>
    <ligand>
        <name>GTP</name>
        <dbReference type="ChEBI" id="CHEBI:37565"/>
    </ligand>
</feature>
<feature type="binding site" description="in other chain" evidence="1">
    <location>
        <begin position="13"/>
        <end position="16"/>
    </location>
    <ligand>
        <name>IMP</name>
        <dbReference type="ChEBI" id="CHEBI:58053"/>
        <note>ligand shared between dimeric partners</note>
    </ligand>
</feature>
<feature type="binding site" evidence="1">
    <location>
        <position position="13"/>
    </location>
    <ligand>
        <name>Mg(2+)</name>
        <dbReference type="ChEBI" id="CHEBI:18420"/>
    </ligand>
</feature>
<feature type="binding site" description="in other chain" evidence="1">
    <location>
        <begin position="38"/>
        <end position="41"/>
    </location>
    <ligand>
        <name>IMP</name>
        <dbReference type="ChEBI" id="CHEBI:58053"/>
        <note>ligand shared between dimeric partners</note>
    </ligand>
</feature>
<feature type="binding site" evidence="1">
    <location>
        <begin position="40"/>
        <end position="42"/>
    </location>
    <ligand>
        <name>GTP</name>
        <dbReference type="ChEBI" id="CHEBI:37565"/>
    </ligand>
</feature>
<feature type="binding site" evidence="1">
    <location>
        <position position="40"/>
    </location>
    <ligand>
        <name>Mg(2+)</name>
        <dbReference type="ChEBI" id="CHEBI:18420"/>
    </ligand>
</feature>
<feature type="binding site" description="in other chain" evidence="1">
    <location>
        <position position="129"/>
    </location>
    <ligand>
        <name>IMP</name>
        <dbReference type="ChEBI" id="CHEBI:58053"/>
        <note>ligand shared between dimeric partners</note>
    </ligand>
</feature>
<feature type="binding site" evidence="1">
    <location>
        <position position="143"/>
    </location>
    <ligand>
        <name>IMP</name>
        <dbReference type="ChEBI" id="CHEBI:58053"/>
        <note>ligand shared between dimeric partners</note>
    </ligand>
</feature>
<feature type="binding site" description="in other chain" evidence="1">
    <location>
        <position position="224"/>
    </location>
    <ligand>
        <name>IMP</name>
        <dbReference type="ChEBI" id="CHEBI:58053"/>
        <note>ligand shared between dimeric partners</note>
    </ligand>
</feature>
<feature type="binding site" description="in other chain" evidence="1">
    <location>
        <position position="239"/>
    </location>
    <ligand>
        <name>IMP</name>
        <dbReference type="ChEBI" id="CHEBI:58053"/>
        <note>ligand shared between dimeric partners</note>
    </ligand>
</feature>
<feature type="binding site" evidence="1">
    <location>
        <begin position="299"/>
        <end position="305"/>
    </location>
    <ligand>
        <name>substrate</name>
    </ligand>
</feature>
<feature type="binding site" description="in other chain" evidence="1">
    <location>
        <position position="303"/>
    </location>
    <ligand>
        <name>IMP</name>
        <dbReference type="ChEBI" id="CHEBI:58053"/>
        <note>ligand shared between dimeric partners</note>
    </ligand>
</feature>
<feature type="binding site" evidence="1">
    <location>
        <position position="305"/>
    </location>
    <ligand>
        <name>GTP</name>
        <dbReference type="ChEBI" id="CHEBI:37565"/>
    </ligand>
</feature>
<feature type="binding site" evidence="1">
    <location>
        <begin position="331"/>
        <end position="333"/>
    </location>
    <ligand>
        <name>GTP</name>
        <dbReference type="ChEBI" id="CHEBI:37565"/>
    </ligand>
</feature>
<feature type="binding site" evidence="1">
    <location>
        <begin position="413"/>
        <end position="415"/>
    </location>
    <ligand>
        <name>GTP</name>
        <dbReference type="ChEBI" id="CHEBI:37565"/>
    </ligand>
</feature>